<feature type="chain" id="PRO_0000065754" description="51.5 kDa protein">
    <location>
        <begin position="1"/>
        <end position="452"/>
    </location>
</feature>
<feature type="domain" description="Helicase ATP-binding" evidence="2">
    <location>
        <begin position="1"/>
        <end position="126"/>
    </location>
</feature>
<feature type="domain" description="Helicase C-terminal" evidence="3">
    <location>
        <begin position="177"/>
        <end position="333"/>
    </location>
</feature>
<feature type="zinc finger region" evidence="1">
    <location>
        <begin position="331"/>
        <end position="348"/>
    </location>
</feature>
<feature type="sequence variant" description="In strain: Isolate 3-1 and Isolate 3-5.">
    <original>H</original>
    <variation>D</variation>
    <location>
        <position position="300"/>
    </location>
</feature>
<feature type="sequence variant" description="In strain: Isolate 3-1 and Isolate 3-5.">
    <original>E</original>
    <variation>K</variation>
    <location>
        <position position="394"/>
    </location>
</feature>
<comment type="function">
    <text>May play a role in either regulating bacteriophages replication or specifying expression of its own genes.</text>
</comment>
<comment type="miscellaneous">
    <text>The two substitutions observed in the protein always occur together.</text>
</comment>
<keyword id="KW-0479">Metal-binding</keyword>
<keyword id="KW-0862">Zinc</keyword>
<keyword id="KW-0863">Zinc-finger</keyword>
<protein>
    <recommendedName>
        <fullName>51.5 kDa protein</fullName>
    </recommendedName>
</protein>
<organismHost>
    <name type="scientific">Lactococcus</name>
    <name type="common">lactic streptococci</name>
    <dbReference type="NCBI Taxonomy" id="1357"/>
</organismHost>
<name>V51K_BPL79</name>
<reference key="1">
    <citation type="journal article" date="1991" name="Gene">
        <title>Identification of a nucleotide sequence conserved in Lactococcus lactis bacteriophages.</title>
        <authorList>
            <person name="Kim S.G."/>
            <person name="Batt C.A."/>
        </authorList>
    </citation>
    <scope>NUCLEOTIDE SEQUENCE [GENOMIC DNA]</scope>
</reference>
<organism>
    <name type="scientific">Lactococcus phage (isolate 7-9)</name>
    <name type="common">Lactococcus bacteriophage isolate 7-9</name>
    <dbReference type="NCBI Taxonomy" id="12375"/>
    <lineage>
        <taxon>Viruses</taxon>
    </lineage>
</organism>
<sequence>MIQSPPGSGKSVVISEITKLATEKGGRVLFLVHRKELIDQITNSFKVHGVPLNQVELLTVGKAKNRLSVLRKPTLIITDEGHHGKAATYQKIYEFYADVPRLGFTATPWRMSGDGFKDTYDYMIEGKTVEWLINNKRLAPYQYYSLPSIDISKLRIKNGDYSNQSIDDALGKTIFGDVVQEYVKHANGQKAILYAHSVEASQSFAKEFQEAGIKAVHVDAKTPKNERDKLMLDFRNGRIKVLCNVDLISEGFDVPDCTVTILCRPTKSLVLFLQQSMRSMRYQHRKTAIIIDNVMNWHAHGLPDTHHDWKDYFEGGWKKKGQKNIVQAKQCPDCSAMWPLSQKMCNLCGHDFSIEEKHEKLRLEAELELIEKEKVKLKILSEKKFGSDLKKNWEIAQARAKVNKGNPLMKLLYFYAKSDWASASIEEIAEVTGKSNYQISQAKEWLQSKGIY</sequence>
<dbReference type="EMBL" id="M36388">
    <property type="protein sequence ID" value="AAA32363.1"/>
    <property type="molecule type" value="Genomic_DNA"/>
</dbReference>
<dbReference type="PIR" id="JU0445">
    <property type="entry name" value="JU0445"/>
</dbReference>
<dbReference type="SMR" id="P24125"/>
<dbReference type="REBASE" id="290970">
    <property type="entry name" value="Msa27082ORF3755P"/>
</dbReference>
<dbReference type="GO" id="GO:0005524">
    <property type="term" value="F:ATP binding"/>
    <property type="evidence" value="ECO:0007669"/>
    <property type="project" value="InterPro"/>
</dbReference>
<dbReference type="GO" id="GO:0003677">
    <property type="term" value="F:DNA binding"/>
    <property type="evidence" value="ECO:0007669"/>
    <property type="project" value="InterPro"/>
</dbReference>
<dbReference type="GO" id="GO:0016787">
    <property type="term" value="F:hydrolase activity"/>
    <property type="evidence" value="ECO:0007669"/>
    <property type="project" value="InterPro"/>
</dbReference>
<dbReference type="GO" id="GO:0008270">
    <property type="term" value="F:zinc ion binding"/>
    <property type="evidence" value="ECO:0007669"/>
    <property type="project" value="UniProtKB-KW"/>
</dbReference>
<dbReference type="Gene3D" id="3.40.50.300">
    <property type="entry name" value="P-loop containing nucleotide triphosphate hydrolases"/>
    <property type="match status" value="2"/>
</dbReference>
<dbReference type="InterPro" id="IPR006935">
    <property type="entry name" value="Helicase/UvrB_N"/>
</dbReference>
<dbReference type="InterPro" id="IPR014001">
    <property type="entry name" value="Helicase_ATP-bd"/>
</dbReference>
<dbReference type="InterPro" id="IPR001650">
    <property type="entry name" value="Helicase_C-like"/>
</dbReference>
<dbReference type="InterPro" id="IPR050742">
    <property type="entry name" value="Helicase_Restrict-Modif_Enz"/>
</dbReference>
<dbReference type="InterPro" id="IPR027417">
    <property type="entry name" value="P-loop_NTPase"/>
</dbReference>
<dbReference type="PANTHER" id="PTHR47396:SF1">
    <property type="entry name" value="ATP-DEPENDENT HELICASE IRC3-RELATED"/>
    <property type="match status" value="1"/>
</dbReference>
<dbReference type="PANTHER" id="PTHR47396">
    <property type="entry name" value="TYPE I RESTRICTION ENZYME ECOKI R PROTEIN"/>
    <property type="match status" value="1"/>
</dbReference>
<dbReference type="Pfam" id="PF00271">
    <property type="entry name" value="Helicase_C"/>
    <property type="match status" value="1"/>
</dbReference>
<dbReference type="Pfam" id="PF04851">
    <property type="entry name" value="ResIII"/>
    <property type="match status" value="2"/>
</dbReference>
<dbReference type="SMART" id="SM00490">
    <property type="entry name" value="HELICc"/>
    <property type="match status" value="1"/>
</dbReference>
<dbReference type="SUPFAM" id="SSF52540">
    <property type="entry name" value="P-loop containing nucleoside triphosphate hydrolases"/>
    <property type="match status" value="1"/>
</dbReference>
<dbReference type="PROSITE" id="PS51192">
    <property type="entry name" value="HELICASE_ATP_BIND_1"/>
    <property type="match status" value="1"/>
</dbReference>
<dbReference type="PROSITE" id="PS51194">
    <property type="entry name" value="HELICASE_CTER"/>
    <property type="match status" value="1"/>
</dbReference>
<accession>P24125</accession>
<proteinExistence type="predicted"/>
<evidence type="ECO:0000255" key="1"/>
<evidence type="ECO:0000255" key="2">
    <source>
        <dbReference type="PROSITE-ProRule" id="PRU00541"/>
    </source>
</evidence>
<evidence type="ECO:0000255" key="3">
    <source>
        <dbReference type="PROSITE-ProRule" id="PRU00542"/>
    </source>
</evidence>